<feature type="chain" id="PRO_1000055205" description="Large ribosomal subunit protein uL6">
    <location>
        <begin position="1"/>
        <end position="176"/>
    </location>
</feature>
<gene>
    <name evidence="1" type="primary">rplF</name>
    <name type="ordered locus">BMA10229_A1939</name>
</gene>
<sequence>MSRVGKSPIALQGAEVKLADGAITVKGPLGTITQAVNPLVNVANNDGTLNLSPVDDSREANALSGTMRAIIANAVHGVTKGFERKLTLVGVGYRAQAQGDKLNLSLGFSHPVVHQMPEGIKAETPTQTEIVIKGIDKQKVGQVAAEVRGYRPPEPYKGKGVRYADEVVILKETKKK</sequence>
<proteinExistence type="inferred from homology"/>
<accession>A2S7J1</accession>
<name>RL6_BURM9</name>
<reference key="1">
    <citation type="journal article" date="2010" name="Genome Biol. Evol.">
        <title>Continuing evolution of Burkholderia mallei through genome reduction and large-scale rearrangements.</title>
        <authorList>
            <person name="Losada L."/>
            <person name="Ronning C.M."/>
            <person name="DeShazer D."/>
            <person name="Woods D."/>
            <person name="Fedorova N."/>
            <person name="Kim H.S."/>
            <person name="Shabalina S.A."/>
            <person name="Pearson T.R."/>
            <person name="Brinkac L."/>
            <person name="Tan P."/>
            <person name="Nandi T."/>
            <person name="Crabtree J."/>
            <person name="Badger J."/>
            <person name="Beckstrom-Sternberg S."/>
            <person name="Saqib M."/>
            <person name="Schutzer S.E."/>
            <person name="Keim P."/>
            <person name="Nierman W.C."/>
        </authorList>
    </citation>
    <scope>NUCLEOTIDE SEQUENCE [LARGE SCALE GENOMIC DNA]</scope>
    <source>
        <strain>NCTC 10229</strain>
    </source>
</reference>
<protein>
    <recommendedName>
        <fullName evidence="1">Large ribosomal subunit protein uL6</fullName>
    </recommendedName>
    <alternativeName>
        <fullName evidence="2">50S ribosomal protein L6</fullName>
    </alternativeName>
</protein>
<dbReference type="EMBL" id="CP000546">
    <property type="protein sequence ID" value="ABN01710.1"/>
    <property type="molecule type" value="Genomic_DNA"/>
</dbReference>
<dbReference type="RefSeq" id="WP_004197947.1">
    <property type="nucleotide sequence ID" value="NC_008836.1"/>
</dbReference>
<dbReference type="SMR" id="A2S7J1"/>
<dbReference type="GeneID" id="93061817"/>
<dbReference type="KEGG" id="bml:BMA10229_A1939"/>
<dbReference type="HOGENOM" id="CLU_065464_1_2_4"/>
<dbReference type="Proteomes" id="UP000002283">
    <property type="component" value="Chromosome I"/>
</dbReference>
<dbReference type="GO" id="GO:0022625">
    <property type="term" value="C:cytosolic large ribosomal subunit"/>
    <property type="evidence" value="ECO:0007669"/>
    <property type="project" value="TreeGrafter"/>
</dbReference>
<dbReference type="GO" id="GO:0019843">
    <property type="term" value="F:rRNA binding"/>
    <property type="evidence" value="ECO:0007669"/>
    <property type="project" value="UniProtKB-UniRule"/>
</dbReference>
<dbReference type="GO" id="GO:0003735">
    <property type="term" value="F:structural constituent of ribosome"/>
    <property type="evidence" value="ECO:0007669"/>
    <property type="project" value="InterPro"/>
</dbReference>
<dbReference type="GO" id="GO:0002181">
    <property type="term" value="P:cytoplasmic translation"/>
    <property type="evidence" value="ECO:0007669"/>
    <property type="project" value="TreeGrafter"/>
</dbReference>
<dbReference type="FunFam" id="3.90.930.12:FF:000001">
    <property type="entry name" value="50S ribosomal protein L6"/>
    <property type="match status" value="1"/>
</dbReference>
<dbReference type="Gene3D" id="3.90.930.12">
    <property type="entry name" value="Ribosomal protein L6, alpha-beta domain"/>
    <property type="match status" value="2"/>
</dbReference>
<dbReference type="HAMAP" id="MF_01365_B">
    <property type="entry name" value="Ribosomal_uL6_B"/>
    <property type="match status" value="1"/>
</dbReference>
<dbReference type="InterPro" id="IPR000702">
    <property type="entry name" value="Ribosomal_uL6-like"/>
</dbReference>
<dbReference type="InterPro" id="IPR036789">
    <property type="entry name" value="Ribosomal_uL6-like_a/b-dom_sf"/>
</dbReference>
<dbReference type="InterPro" id="IPR020040">
    <property type="entry name" value="Ribosomal_uL6_a/b-dom"/>
</dbReference>
<dbReference type="InterPro" id="IPR019906">
    <property type="entry name" value="Ribosomal_uL6_bac-type"/>
</dbReference>
<dbReference type="InterPro" id="IPR002358">
    <property type="entry name" value="Ribosomal_uL6_CS"/>
</dbReference>
<dbReference type="NCBIfam" id="TIGR03654">
    <property type="entry name" value="L6_bact"/>
    <property type="match status" value="1"/>
</dbReference>
<dbReference type="PANTHER" id="PTHR11655">
    <property type="entry name" value="60S/50S RIBOSOMAL PROTEIN L6/L9"/>
    <property type="match status" value="1"/>
</dbReference>
<dbReference type="PANTHER" id="PTHR11655:SF14">
    <property type="entry name" value="LARGE RIBOSOMAL SUBUNIT PROTEIN UL6M"/>
    <property type="match status" value="1"/>
</dbReference>
<dbReference type="Pfam" id="PF00347">
    <property type="entry name" value="Ribosomal_L6"/>
    <property type="match status" value="2"/>
</dbReference>
<dbReference type="PIRSF" id="PIRSF002162">
    <property type="entry name" value="Ribosomal_L6"/>
    <property type="match status" value="1"/>
</dbReference>
<dbReference type="PRINTS" id="PR00059">
    <property type="entry name" value="RIBOSOMALL6"/>
</dbReference>
<dbReference type="SUPFAM" id="SSF56053">
    <property type="entry name" value="Ribosomal protein L6"/>
    <property type="match status" value="2"/>
</dbReference>
<dbReference type="PROSITE" id="PS00525">
    <property type="entry name" value="RIBOSOMAL_L6_1"/>
    <property type="match status" value="1"/>
</dbReference>
<comment type="function">
    <text evidence="1">This protein binds to the 23S rRNA, and is important in its secondary structure. It is located near the subunit interface in the base of the L7/L12 stalk, and near the tRNA binding site of the peptidyltransferase center.</text>
</comment>
<comment type="subunit">
    <text evidence="1">Part of the 50S ribosomal subunit.</text>
</comment>
<comment type="similarity">
    <text evidence="1">Belongs to the universal ribosomal protein uL6 family.</text>
</comment>
<evidence type="ECO:0000255" key="1">
    <source>
        <dbReference type="HAMAP-Rule" id="MF_01365"/>
    </source>
</evidence>
<evidence type="ECO:0000305" key="2"/>
<organism>
    <name type="scientific">Burkholderia mallei (strain NCTC 10229)</name>
    <dbReference type="NCBI Taxonomy" id="412022"/>
    <lineage>
        <taxon>Bacteria</taxon>
        <taxon>Pseudomonadati</taxon>
        <taxon>Pseudomonadota</taxon>
        <taxon>Betaproteobacteria</taxon>
        <taxon>Burkholderiales</taxon>
        <taxon>Burkholderiaceae</taxon>
        <taxon>Burkholderia</taxon>
        <taxon>pseudomallei group</taxon>
    </lineage>
</organism>
<keyword id="KW-0687">Ribonucleoprotein</keyword>
<keyword id="KW-0689">Ribosomal protein</keyword>
<keyword id="KW-0694">RNA-binding</keyword>
<keyword id="KW-0699">rRNA-binding</keyword>